<name>COAA_ECOLI</name>
<feature type="chain" id="PRO_0000194426" description="Pantothenate kinase">
    <location>
        <begin position="1"/>
        <end position="316"/>
    </location>
</feature>
<feature type="binding site" evidence="1">
    <location>
        <begin position="95"/>
        <end position="102"/>
    </location>
    <ligand>
        <name>ATP</name>
        <dbReference type="ChEBI" id="CHEBI:30616"/>
    </ligand>
</feature>
<feature type="strand" evidence="5">
    <location>
        <begin position="11"/>
        <end position="16"/>
    </location>
</feature>
<feature type="helix" evidence="5">
    <location>
        <begin position="17"/>
        <end position="22"/>
    </location>
</feature>
<feature type="helix" evidence="5">
    <location>
        <begin position="33"/>
        <end position="42"/>
    </location>
</feature>
<feature type="strand" evidence="4">
    <location>
        <begin position="44"/>
        <end position="46"/>
    </location>
</feature>
<feature type="helix" evidence="5">
    <location>
        <begin position="48"/>
        <end position="53"/>
    </location>
</feature>
<feature type="helix" evidence="5">
    <location>
        <begin position="55"/>
        <end position="80"/>
    </location>
</feature>
<feature type="strand" evidence="5">
    <location>
        <begin position="89"/>
        <end position="95"/>
    </location>
</feature>
<feature type="helix" evidence="5">
    <location>
        <begin position="101"/>
        <end position="112"/>
    </location>
</feature>
<feature type="strand" evidence="3">
    <location>
        <begin position="115"/>
        <end position="117"/>
    </location>
</feature>
<feature type="strand" evidence="5">
    <location>
        <begin position="121"/>
        <end position="125"/>
    </location>
</feature>
<feature type="helix" evidence="5">
    <location>
        <begin position="126"/>
        <end position="129"/>
    </location>
</feature>
<feature type="helix" evidence="5">
    <location>
        <begin position="133"/>
        <end position="139"/>
    </location>
</feature>
<feature type="helix" evidence="5">
    <location>
        <begin position="148"/>
        <end position="150"/>
    </location>
</feature>
<feature type="helix" evidence="5">
    <location>
        <begin position="153"/>
        <end position="163"/>
    </location>
</feature>
<feature type="turn" evidence="5">
    <location>
        <begin position="164"/>
        <end position="166"/>
    </location>
</feature>
<feature type="strand" evidence="5">
    <location>
        <begin position="170"/>
        <end position="172"/>
    </location>
</feature>
<feature type="turn" evidence="5">
    <location>
        <begin position="177"/>
        <end position="180"/>
    </location>
</feature>
<feature type="strand" evidence="5">
    <location>
        <begin position="188"/>
        <end position="190"/>
    </location>
</feature>
<feature type="strand" evidence="5">
    <location>
        <begin position="195"/>
        <end position="199"/>
    </location>
</feature>
<feature type="turn" evidence="5">
    <location>
        <begin position="201"/>
        <end position="204"/>
    </location>
</feature>
<feature type="helix" evidence="5">
    <location>
        <begin position="207"/>
        <end position="209"/>
    </location>
</feature>
<feature type="helix" evidence="5">
    <location>
        <begin position="219"/>
        <end position="222"/>
    </location>
</feature>
<feature type="strand" evidence="5">
    <location>
        <begin position="224"/>
        <end position="230"/>
    </location>
</feature>
<feature type="helix" evidence="5">
    <location>
        <begin position="233"/>
        <end position="249"/>
    </location>
</feature>
<feature type="turn" evidence="5">
    <location>
        <begin position="250"/>
        <end position="253"/>
    </location>
</feature>
<feature type="helix" evidence="5">
    <location>
        <begin position="260"/>
        <end position="263"/>
    </location>
</feature>
<feature type="helix" evidence="5">
    <location>
        <begin position="267"/>
        <end position="280"/>
    </location>
</feature>
<feature type="helix" evidence="5">
    <location>
        <begin position="282"/>
        <end position="288"/>
    </location>
</feature>
<feature type="helix" evidence="5">
    <location>
        <begin position="291"/>
        <end position="296"/>
    </location>
</feature>
<feature type="strand" evidence="5">
    <location>
        <begin position="298"/>
        <end position="303"/>
    </location>
</feature>
<feature type="helix" evidence="5">
    <location>
        <begin position="305"/>
        <end position="307"/>
    </location>
</feature>
<feature type="strand" evidence="5">
    <location>
        <begin position="309"/>
        <end position="315"/>
    </location>
</feature>
<organism>
    <name type="scientific">Escherichia coli (strain K12)</name>
    <dbReference type="NCBI Taxonomy" id="83333"/>
    <lineage>
        <taxon>Bacteria</taxon>
        <taxon>Pseudomonadati</taxon>
        <taxon>Pseudomonadota</taxon>
        <taxon>Gammaproteobacteria</taxon>
        <taxon>Enterobacterales</taxon>
        <taxon>Enterobacteriaceae</taxon>
        <taxon>Escherichia</taxon>
    </lineage>
</organism>
<sequence>MSIKEQTLMTPYLQFDRNQWAALRDSVPMTLSEDEIARLKGINEDLSLEEVAEIYLPLSRLLNFYISSNLRRQAVLEQFLGTNGQRIPYIISIAGSVAVGKSTTARVLQALLSRWPEHRRVELITTDGFLHPNQVLKERGLMKKKGFPESYDMHRLVKFVSDLKSGVPNVTAPVYSHLIYDVIPDGDKTVVQPDILILEGLNVLQSGMDYPHDPHHVFVSDFVDFSIYVDAPEDLLQTWYINRFLKFREGAFTDPDSYFHNYAKLTKEEAIKTAMTLWKEINWLNLKQNILPTRERASLILTKSANHAVEEVRLRK</sequence>
<gene>
    <name type="primary">coaA</name>
    <name type="synonym">panK</name>
    <name type="synonym">rts</name>
    <name type="ordered locus">b3974</name>
    <name type="ordered locus">JW3942</name>
</gene>
<reference key="1">
    <citation type="journal article" date="1992" name="J. Bacteriol.">
        <title>Cloning, sequencing, and expression of the pantothenate kinase (coaA) gene of Escherichia coli.</title>
        <authorList>
            <person name="Song W.-J."/>
            <person name="Jackowski S."/>
        </authorList>
    </citation>
    <scope>NUCLEOTIDE SEQUENCE [GENOMIC DNA]</scope>
</reference>
<reference key="2">
    <citation type="journal article" date="1992" name="J. Bacteriol.">
        <title>coaA and rts are allelic and located at kilobase 3532 on the Escherichia coli physical map.</title>
        <authorList>
            <person name="Song W.-J."/>
            <person name="Jackowski S."/>
        </authorList>
    </citation>
    <scope>NUCLEOTIDE SEQUENCE [GENOMIC DNA]</scope>
</reference>
<reference key="3">
    <citation type="journal article" date="1988" name="Gene">
        <title>The nucleotide sequence of the Escherichia coli rts gene.</title>
        <authorList>
            <person name="Flamm J.A."/>
            <person name="Friesen J.D."/>
            <person name="Otsuka A.J."/>
        </authorList>
    </citation>
    <scope>NUCLEOTIDE SEQUENCE [GENOMIC DNA]</scope>
</reference>
<reference key="4">
    <citation type="journal article" date="1993" name="Nucleic Acids Res.">
        <title>Analysis of the Escherichia coli genome. IV. DNA sequence of the region from 89.2 to 92.8 minutes.</title>
        <authorList>
            <person name="Blattner F.R."/>
            <person name="Burland V.D."/>
            <person name="Plunkett G. III"/>
            <person name="Sofia H.J."/>
            <person name="Daniels D.L."/>
        </authorList>
    </citation>
    <scope>NUCLEOTIDE SEQUENCE [LARGE SCALE GENOMIC DNA]</scope>
    <source>
        <strain>K12 / MG1655 / ATCC 47076</strain>
    </source>
</reference>
<reference key="5">
    <citation type="journal article" date="1997" name="Science">
        <title>The complete genome sequence of Escherichia coli K-12.</title>
        <authorList>
            <person name="Blattner F.R."/>
            <person name="Plunkett G. III"/>
            <person name="Bloch C.A."/>
            <person name="Perna N.T."/>
            <person name="Burland V."/>
            <person name="Riley M."/>
            <person name="Collado-Vides J."/>
            <person name="Glasner J.D."/>
            <person name="Rode C.K."/>
            <person name="Mayhew G.F."/>
            <person name="Gregor J."/>
            <person name="Davis N.W."/>
            <person name="Kirkpatrick H.A."/>
            <person name="Goeden M.A."/>
            <person name="Rose D.J."/>
            <person name="Mau B."/>
            <person name="Shao Y."/>
        </authorList>
    </citation>
    <scope>NUCLEOTIDE SEQUENCE [LARGE SCALE GENOMIC DNA]</scope>
    <source>
        <strain>K12 / MG1655 / ATCC 47076</strain>
    </source>
</reference>
<reference key="6">
    <citation type="journal article" date="2006" name="Mol. Syst. Biol.">
        <title>Highly accurate genome sequences of Escherichia coli K-12 strains MG1655 and W3110.</title>
        <authorList>
            <person name="Hayashi K."/>
            <person name="Morooka N."/>
            <person name="Yamamoto Y."/>
            <person name="Fujita K."/>
            <person name="Isono K."/>
            <person name="Choi S."/>
            <person name="Ohtsubo E."/>
            <person name="Baba T."/>
            <person name="Wanner B.L."/>
            <person name="Mori H."/>
            <person name="Horiuchi T."/>
        </authorList>
    </citation>
    <scope>NUCLEOTIDE SEQUENCE [LARGE SCALE GENOMIC DNA]</scope>
    <source>
        <strain>K12 / W3110 / ATCC 27325 / DSM 5911</strain>
    </source>
</reference>
<accession>P0A6I3</accession>
<accession>P15044</accession>
<accession>Q2M8R5</accession>
<evidence type="ECO:0000255" key="1"/>
<evidence type="ECO:0000305" key="2"/>
<evidence type="ECO:0007829" key="3">
    <source>
        <dbReference type="PDB" id="1ESM"/>
    </source>
</evidence>
<evidence type="ECO:0007829" key="4">
    <source>
        <dbReference type="PDB" id="1ESN"/>
    </source>
</evidence>
<evidence type="ECO:0007829" key="5">
    <source>
        <dbReference type="PDB" id="1SQ5"/>
    </source>
</evidence>
<keyword id="KW-0002">3D-structure</keyword>
<keyword id="KW-0067">ATP-binding</keyword>
<keyword id="KW-0173">Coenzyme A biosynthesis</keyword>
<keyword id="KW-0963">Cytoplasm</keyword>
<keyword id="KW-0418">Kinase</keyword>
<keyword id="KW-0547">Nucleotide-binding</keyword>
<keyword id="KW-1185">Reference proteome</keyword>
<keyword id="KW-0808">Transferase</keyword>
<dbReference type="EC" id="2.7.1.33"/>
<dbReference type="EMBL" id="M36321">
    <property type="protein sequence ID" value="AAA76838.1"/>
    <property type="status" value="ALT_INIT"/>
    <property type="molecule type" value="Genomic_DNA"/>
</dbReference>
<dbReference type="EMBL" id="M90071">
    <property type="protein sequence ID" value="AAA23590.1"/>
    <property type="molecule type" value="Genomic_DNA"/>
</dbReference>
<dbReference type="EMBL" id="M90071">
    <property type="protein sequence ID" value="AAA23591.1"/>
    <property type="status" value="ALT_INIT"/>
    <property type="molecule type" value="Genomic_DNA"/>
</dbReference>
<dbReference type="EMBL" id="U00006">
    <property type="protein sequence ID" value="AAC43076.1"/>
    <property type="molecule type" value="Genomic_DNA"/>
</dbReference>
<dbReference type="EMBL" id="U00096">
    <property type="protein sequence ID" value="AAC76952.1"/>
    <property type="molecule type" value="Genomic_DNA"/>
</dbReference>
<dbReference type="EMBL" id="AP009048">
    <property type="protein sequence ID" value="BAE77341.1"/>
    <property type="molecule type" value="Genomic_DNA"/>
</dbReference>
<dbReference type="PIR" id="A45727">
    <property type="entry name" value="BVECRS"/>
</dbReference>
<dbReference type="RefSeq" id="NP_418405.1">
    <property type="nucleotide sequence ID" value="NC_000913.3"/>
</dbReference>
<dbReference type="RefSeq" id="WP_000023081.1">
    <property type="nucleotide sequence ID" value="NZ_STEB01000072.1"/>
</dbReference>
<dbReference type="PDB" id="1ESM">
    <property type="method" value="X-ray"/>
    <property type="resolution" value="2.50 A"/>
    <property type="chains" value="A/B/C/D=1-316"/>
</dbReference>
<dbReference type="PDB" id="1ESN">
    <property type="method" value="X-ray"/>
    <property type="resolution" value="2.60 A"/>
    <property type="chains" value="A/B/C/D=1-316"/>
</dbReference>
<dbReference type="PDB" id="1SQ5">
    <property type="method" value="X-ray"/>
    <property type="resolution" value="2.20 A"/>
    <property type="chains" value="A/B/C/D=9-316"/>
</dbReference>
<dbReference type="PDBsum" id="1ESM"/>
<dbReference type="PDBsum" id="1ESN"/>
<dbReference type="PDBsum" id="1SQ5"/>
<dbReference type="SMR" id="P0A6I3"/>
<dbReference type="BioGRID" id="4263383">
    <property type="interactions" value="3"/>
</dbReference>
<dbReference type="FunCoup" id="P0A6I3">
    <property type="interactions" value="321"/>
</dbReference>
<dbReference type="IntAct" id="P0A6I3">
    <property type="interactions" value="2"/>
</dbReference>
<dbReference type="STRING" id="511145.b3974"/>
<dbReference type="ChEMBL" id="CHEMBL5092"/>
<dbReference type="DrugBank" id="DB01992">
    <property type="generic name" value="Coenzyme A"/>
</dbReference>
<dbReference type="DrugBank" id="DB01783">
    <property type="generic name" value="Pantothenic acid"/>
</dbReference>
<dbReference type="DrugBank" id="DB04395">
    <property type="generic name" value="Phosphoaminophosphonic Acid-Adenylate Ester"/>
</dbReference>
<dbReference type="jPOST" id="P0A6I3"/>
<dbReference type="PaxDb" id="511145-b3974"/>
<dbReference type="EnsemblBacteria" id="AAC76952">
    <property type="protein sequence ID" value="AAC76952"/>
    <property type="gene ID" value="b3974"/>
</dbReference>
<dbReference type="GeneID" id="93777919"/>
<dbReference type="GeneID" id="948479"/>
<dbReference type="KEGG" id="ecj:JW3942"/>
<dbReference type="KEGG" id="eco:b3974"/>
<dbReference type="PATRIC" id="fig|511145.12.peg.4091"/>
<dbReference type="EchoBASE" id="EB0915"/>
<dbReference type="eggNOG" id="COG1072">
    <property type="taxonomic scope" value="Bacteria"/>
</dbReference>
<dbReference type="HOGENOM" id="CLU_053818_1_1_6"/>
<dbReference type="InParanoid" id="P0A6I3"/>
<dbReference type="OMA" id="MQRKGFP"/>
<dbReference type="OrthoDB" id="1550976at2"/>
<dbReference type="PhylomeDB" id="P0A6I3"/>
<dbReference type="BioCyc" id="EcoCyc:PANTOTHENATE-KIN-MONOMER"/>
<dbReference type="BioCyc" id="MetaCyc:PANTOTHENATE-KIN-MONOMER"/>
<dbReference type="BRENDA" id="2.7.1.33">
    <property type="organism ID" value="2026"/>
</dbReference>
<dbReference type="SABIO-RK" id="P0A6I3"/>
<dbReference type="UniPathway" id="UPA00241">
    <property type="reaction ID" value="UER00352"/>
</dbReference>
<dbReference type="EvolutionaryTrace" id="P0A6I3"/>
<dbReference type="PRO" id="PR:P0A6I3"/>
<dbReference type="Proteomes" id="UP000000625">
    <property type="component" value="Chromosome"/>
</dbReference>
<dbReference type="GO" id="GO:0005737">
    <property type="term" value="C:cytoplasm"/>
    <property type="evidence" value="ECO:0000318"/>
    <property type="project" value="GO_Central"/>
</dbReference>
<dbReference type="GO" id="GO:0005524">
    <property type="term" value="F:ATP binding"/>
    <property type="evidence" value="ECO:0007669"/>
    <property type="project" value="UniProtKB-UniRule"/>
</dbReference>
<dbReference type="GO" id="GO:0050165">
    <property type="term" value="F:pantetheine kinase activity"/>
    <property type="evidence" value="ECO:0000314"/>
    <property type="project" value="EcoCyc"/>
</dbReference>
<dbReference type="GO" id="GO:0004594">
    <property type="term" value="F:pantothenate kinase activity"/>
    <property type="evidence" value="ECO:0000314"/>
    <property type="project" value="EcoCyc"/>
</dbReference>
<dbReference type="GO" id="GO:0042803">
    <property type="term" value="F:protein homodimerization activity"/>
    <property type="evidence" value="ECO:0000314"/>
    <property type="project" value="EcoCyc"/>
</dbReference>
<dbReference type="GO" id="GO:0015937">
    <property type="term" value="P:coenzyme A biosynthetic process"/>
    <property type="evidence" value="ECO:0000315"/>
    <property type="project" value="EcoCyc"/>
</dbReference>
<dbReference type="CDD" id="cd02025">
    <property type="entry name" value="PanK"/>
    <property type="match status" value="1"/>
</dbReference>
<dbReference type="FunFam" id="3.40.50.300:FF:000242">
    <property type="entry name" value="Pantothenate kinase"/>
    <property type="match status" value="1"/>
</dbReference>
<dbReference type="Gene3D" id="3.40.50.300">
    <property type="entry name" value="P-loop containing nucleotide triphosphate hydrolases"/>
    <property type="match status" value="1"/>
</dbReference>
<dbReference type="HAMAP" id="MF_00215">
    <property type="entry name" value="Pantothen_kinase_1"/>
    <property type="match status" value="1"/>
</dbReference>
<dbReference type="InterPro" id="IPR027417">
    <property type="entry name" value="P-loop_NTPase"/>
</dbReference>
<dbReference type="InterPro" id="IPR004566">
    <property type="entry name" value="PanK"/>
</dbReference>
<dbReference type="InterPro" id="IPR006083">
    <property type="entry name" value="PRK/URK"/>
</dbReference>
<dbReference type="NCBIfam" id="TIGR00554">
    <property type="entry name" value="panK_bact"/>
    <property type="match status" value="1"/>
</dbReference>
<dbReference type="PANTHER" id="PTHR10285">
    <property type="entry name" value="URIDINE KINASE"/>
    <property type="match status" value="1"/>
</dbReference>
<dbReference type="Pfam" id="PF00485">
    <property type="entry name" value="PRK"/>
    <property type="match status" value="1"/>
</dbReference>
<dbReference type="PIRSF" id="PIRSF000545">
    <property type="entry name" value="Pantothenate_kin"/>
    <property type="match status" value="1"/>
</dbReference>
<dbReference type="SUPFAM" id="SSF52540">
    <property type="entry name" value="P-loop containing nucleoside triphosphate hydrolases"/>
    <property type="match status" value="1"/>
</dbReference>
<proteinExistence type="evidence at protein level"/>
<comment type="catalytic activity">
    <reaction>
        <text>(R)-pantothenate + ATP = (R)-4'-phosphopantothenate + ADP + H(+)</text>
        <dbReference type="Rhea" id="RHEA:16373"/>
        <dbReference type="ChEBI" id="CHEBI:10986"/>
        <dbReference type="ChEBI" id="CHEBI:15378"/>
        <dbReference type="ChEBI" id="CHEBI:29032"/>
        <dbReference type="ChEBI" id="CHEBI:30616"/>
        <dbReference type="ChEBI" id="CHEBI:456216"/>
        <dbReference type="EC" id="2.7.1.33"/>
    </reaction>
</comment>
<comment type="activity regulation">
    <text>Regulated by feedback inhibition by CoA and its thioesters.</text>
</comment>
<comment type="pathway">
    <text>Cofactor biosynthesis; coenzyme A biosynthesis; CoA from (R)-pantothenate: step 1/5.</text>
</comment>
<comment type="subcellular location">
    <subcellularLocation>
        <location evidence="2">Cytoplasm</location>
    </subcellularLocation>
</comment>
<comment type="similarity">
    <text evidence="2">Belongs to the prokaryotic pantothenate kinase family.</text>
</comment>
<comment type="sequence caution" evidence="2">
    <conflict type="erroneous initiation">
        <sequence resource="EMBL-CDS" id="AAA23591"/>
    </conflict>
</comment>
<comment type="sequence caution" evidence="2">
    <conflict type="erroneous initiation">
        <sequence resource="EMBL-CDS" id="AAA76838"/>
    </conflict>
</comment>
<protein>
    <recommendedName>
        <fullName>Pantothenate kinase</fullName>
        <ecNumber>2.7.1.33</ecNumber>
    </recommendedName>
    <alternativeName>
        <fullName>Pantothenic acid kinase</fullName>
    </alternativeName>
    <alternativeName>
        <fullName>Rts protein</fullName>
    </alternativeName>
</protein>